<keyword id="KW-0903">Direct protein sequencing</keyword>
<accession>P85418</accession>
<protein>
    <recommendedName>
        <fullName>Unknown protein 5</fullName>
    </recommendedName>
</protein>
<sequence>VNXNTPIR</sequence>
<name>UP05_ZINEL</name>
<proteinExistence type="evidence at protein level"/>
<organism>
    <name type="scientific">Zinnia elegans</name>
    <name type="common">Garden zinnia</name>
    <name type="synonym">Zinnia violacea</name>
    <dbReference type="NCBI Taxonomy" id="34245"/>
    <lineage>
        <taxon>Eukaryota</taxon>
        <taxon>Viridiplantae</taxon>
        <taxon>Streptophyta</taxon>
        <taxon>Embryophyta</taxon>
        <taxon>Tracheophyta</taxon>
        <taxon>Spermatophyta</taxon>
        <taxon>Magnoliopsida</taxon>
        <taxon>eudicotyledons</taxon>
        <taxon>Gunneridae</taxon>
        <taxon>Pentapetalae</taxon>
        <taxon>asterids</taxon>
        <taxon>campanulids</taxon>
        <taxon>Asterales</taxon>
        <taxon>Asteraceae</taxon>
        <taxon>Asteroideae</taxon>
        <taxon>Heliantheae alliance</taxon>
        <taxon>Heliantheae</taxon>
        <taxon>Zinnia</taxon>
    </lineage>
</organism>
<feature type="chain" id="PRO_0000341528" description="Unknown protein 5">
    <location>
        <begin position="1" status="less than"/>
        <end position="8" status="greater than"/>
    </location>
</feature>
<feature type="unsure residue" description="I or L">
    <location>
        <position position="7"/>
    </location>
</feature>
<feature type="non-terminal residue">
    <location>
        <position position="1"/>
    </location>
</feature>
<feature type="non-terminal residue">
    <location>
        <position position="8"/>
    </location>
</feature>
<evidence type="ECO:0000305" key="1"/>
<reference evidence="1" key="1">
    <citation type="submission" date="2007-12" db="UniProtKB">
        <authorList>
            <person name="Gabaldon C."/>
            <person name="Gomez Ros L.V."/>
            <person name="Novo Uzal E."/>
            <person name="Ros Barcelo A."/>
        </authorList>
    </citation>
    <scope>PROTEIN SEQUENCE</scope>
    <source>
        <strain>cv. Envy</strain>
        <tissue>Callus</tissue>
    </source>
</reference>